<reference key="1">
    <citation type="submission" date="2009-03" db="EMBL/GenBank/DDBJ databases">
        <title>Comparison of the complete genome sequences of Rhodococcus erythropolis PR4 and Rhodococcus opacus B4.</title>
        <authorList>
            <person name="Takarada H."/>
            <person name="Sekine M."/>
            <person name="Hosoyama A."/>
            <person name="Yamada R."/>
            <person name="Fujisawa T."/>
            <person name="Omata S."/>
            <person name="Shimizu A."/>
            <person name="Tsukatani N."/>
            <person name="Tanikawa S."/>
            <person name="Fujita N."/>
            <person name="Harayama S."/>
        </authorList>
    </citation>
    <scope>NUCLEOTIDE SEQUENCE [LARGE SCALE GENOMIC DNA]</scope>
    <source>
        <strain>B4</strain>
    </source>
</reference>
<accession>C1AXZ1</accession>
<gene>
    <name evidence="1" type="primary">ureB</name>
    <name type="ordered locus">ROP_57390</name>
</gene>
<protein>
    <recommendedName>
        <fullName evidence="1">Urease subunit beta</fullName>
        <ecNumber evidence="1">3.5.1.5</ecNumber>
    </recommendedName>
    <alternativeName>
        <fullName evidence="1">Urea amidohydrolase subunit beta</fullName>
    </alternativeName>
</protein>
<organism>
    <name type="scientific">Rhodococcus opacus (strain B4)</name>
    <dbReference type="NCBI Taxonomy" id="632772"/>
    <lineage>
        <taxon>Bacteria</taxon>
        <taxon>Bacillati</taxon>
        <taxon>Actinomycetota</taxon>
        <taxon>Actinomycetes</taxon>
        <taxon>Mycobacteriales</taxon>
        <taxon>Nocardiaceae</taxon>
        <taxon>Rhodococcus</taxon>
    </lineage>
</organism>
<keyword id="KW-0963">Cytoplasm</keyword>
<keyword id="KW-0378">Hydrolase</keyword>
<name>URE2_RHOOB</name>
<comment type="catalytic activity">
    <reaction evidence="1">
        <text>urea + 2 H2O + H(+) = hydrogencarbonate + 2 NH4(+)</text>
        <dbReference type="Rhea" id="RHEA:20557"/>
        <dbReference type="ChEBI" id="CHEBI:15377"/>
        <dbReference type="ChEBI" id="CHEBI:15378"/>
        <dbReference type="ChEBI" id="CHEBI:16199"/>
        <dbReference type="ChEBI" id="CHEBI:17544"/>
        <dbReference type="ChEBI" id="CHEBI:28938"/>
        <dbReference type="EC" id="3.5.1.5"/>
    </reaction>
</comment>
<comment type="pathway">
    <text evidence="1">Nitrogen metabolism; urea degradation; CO(2) and NH(3) from urea (urease route): step 1/1.</text>
</comment>
<comment type="subunit">
    <text evidence="1">Heterotrimer of UreA (gamma), UreB (beta) and UreC (alpha) subunits. Three heterotrimers associate to form the active enzyme.</text>
</comment>
<comment type="subcellular location">
    <subcellularLocation>
        <location evidence="1">Cytoplasm</location>
    </subcellularLocation>
</comment>
<comment type="similarity">
    <text evidence="1">Belongs to the urease beta subunit family.</text>
</comment>
<dbReference type="EC" id="3.5.1.5" evidence="1"/>
<dbReference type="EMBL" id="AP011115">
    <property type="protein sequence ID" value="BAH53986.1"/>
    <property type="molecule type" value="Genomic_DNA"/>
</dbReference>
<dbReference type="RefSeq" id="WP_015889480.1">
    <property type="nucleotide sequence ID" value="NC_012522.1"/>
</dbReference>
<dbReference type="SMR" id="C1AXZ1"/>
<dbReference type="STRING" id="632772.ROP_57390"/>
<dbReference type="KEGG" id="rop:ROP_57390"/>
<dbReference type="PATRIC" id="fig|632772.20.peg.5993"/>
<dbReference type="HOGENOM" id="CLU_129707_1_1_11"/>
<dbReference type="OrthoDB" id="9797217at2"/>
<dbReference type="UniPathway" id="UPA00258">
    <property type="reaction ID" value="UER00370"/>
</dbReference>
<dbReference type="Proteomes" id="UP000002212">
    <property type="component" value="Chromosome"/>
</dbReference>
<dbReference type="GO" id="GO:0035550">
    <property type="term" value="C:urease complex"/>
    <property type="evidence" value="ECO:0007669"/>
    <property type="project" value="InterPro"/>
</dbReference>
<dbReference type="GO" id="GO:0009039">
    <property type="term" value="F:urease activity"/>
    <property type="evidence" value="ECO:0007669"/>
    <property type="project" value="UniProtKB-UniRule"/>
</dbReference>
<dbReference type="GO" id="GO:0043419">
    <property type="term" value="P:urea catabolic process"/>
    <property type="evidence" value="ECO:0007669"/>
    <property type="project" value="UniProtKB-UniRule"/>
</dbReference>
<dbReference type="CDD" id="cd00407">
    <property type="entry name" value="Urease_beta"/>
    <property type="match status" value="1"/>
</dbReference>
<dbReference type="Gene3D" id="2.10.150.10">
    <property type="entry name" value="Urease, beta subunit"/>
    <property type="match status" value="1"/>
</dbReference>
<dbReference type="HAMAP" id="MF_01954">
    <property type="entry name" value="Urease_beta"/>
    <property type="match status" value="1"/>
</dbReference>
<dbReference type="InterPro" id="IPR002019">
    <property type="entry name" value="Urease_beta-like"/>
</dbReference>
<dbReference type="InterPro" id="IPR036461">
    <property type="entry name" value="Urease_betasu_sf"/>
</dbReference>
<dbReference type="InterPro" id="IPR050069">
    <property type="entry name" value="Urease_subunit"/>
</dbReference>
<dbReference type="NCBIfam" id="NF009682">
    <property type="entry name" value="PRK13203.1"/>
    <property type="match status" value="1"/>
</dbReference>
<dbReference type="NCBIfam" id="TIGR00192">
    <property type="entry name" value="urease_beta"/>
    <property type="match status" value="1"/>
</dbReference>
<dbReference type="PANTHER" id="PTHR33569">
    <property type="entry name" value="UREASE"/>
    <property type="match status" value="1"/>
</dbReference>
<dbReference type="PANTHER" id="PTHR33569:SF1">
    <property type="entry name" value="UREASE"/>
    <property type="match status" value="1"/>
</dbReference>
<dbReference type="Pfam" id="PF00699">
    <property type="entry name" value="Urease_beta"/>
    <property type="match status" value="1"/>
</dbReference>
<dbReference type="SUPFAM" id="SSF51278">
    <property type="entry name" value="Urease, beta-subunit"/>
    <property type="match status" value="1"/>
</dbReference>
<evidence type="ECO:0000255" key="1">
    <source>
        <dbReference type="HAMAP-Rule" id="MF_01954"/>
    </source>
</evidence>
<feature type="chain" id="PRO_1000188940" description="Urease subunit beta">
    <location>
        <begin position="1"/>
        <end position="104"/>
    </location>
</feature>
<proteinExistence type="inferred from homology"/>
<sequence>MIPGEVFCAEGVIELNEGAPRTELDVVNTGDRPVQVGSHVHFPQANHALQFDRSAAHGLRLDIPAGTAVRFEPGIAQTVVLVPLRGTREVHGLSLTPPGKLDAS</sequence>